<proteinExistence type="inferred from homology"/>
<protein>
    <recommendedName>
        <fullName evidence="1">Mycothiol acetyltransferase</fullName>
        <shortName evidence="1">MSH acetyltransferase</shortName>
        <ecNumber evidence="1">2.3.1.189</ecNumber>
    </recommendedName>
    <alternativeName>
        <fullName evidence="1">Mycothiol synthase</fullName>
    </alternativeName>
</protein>
<feature type="chain" id="PRO_0000400244" description="Mycothiol acetyltransferase">
    <location>
        <begin position="1"/>
        <end position="348"/>
    </location>
</feature>
<feature type="domain" description="N-acetyltransferase 1" evidence="1">
    <location>
        <begin position="12"/>
        <end position="156"/>
    </location>
</feature>
<feature type="domain" description="N-acetyltransferase 2" evidence="1">
    <location>
        <begin position="169"/>
        <end position="330"/>
    </location>
</feature>
<feature type="region of interest" description="Disordered" evidence="2">
    <location>
        <begin position="320"/>
        <end position="348"/>
    </location>
</feature>
<feature type="compositionally biased region" description="Polar residues" evidence="2">
    <location>
        <begin position="336"/>
        <end position="348"/>
    </location>
</feature>
<feature type="binding site" evidence="1">
    <location>
        <position position="44"/>
    </location>
    <ligand>
        <name>1D-myo-inositol 2-(L-cysteinylamino)-2-deoxy-alpha-D-glucopyranoside</name>
        <dbReference type="ChEBI" id="CHEBI:58887"/>
    </ligand>
</feature>
<feature type="binding site" evidence="1">
    <location>
        <begin position="91"/>
        <end position="93"/>
    </location>
    <ligand>
        <name>acetyl-CoA</name>
        <dbReference type="ChEBI" id="CHEBI:57288"/>
        <label>1</label>
    </ligand>
</feature>
<feature type="binding site" evidence="1">
    <location>
        <position position="196"/>
    </location>
    <ligand>
        <name>1D-myo-inositol 2-(L-cysteinylamino)-2-deoxy-alpha-D-glucopyranoside</name>
        <dbReference type="ChEBI" id="CHEBI:58887"/>
    </ligand>
</feature>
<feature type="binding site" evidence="1">
    <location>
        <position position="235"/>
    </location>
    <ligand>
        <name>1D-myo-inositol 2-(L-cysteinylamino)-2-deoxy-alpha-D-glucopyranoside</name>
        <dbReference type="ChEBI" id="CHEBI:58887"/>
    </ligand>
</feature>
<feature type="binding site" evidence="1">
    <location>
        <position position="253"/>
    </location>
    <ligand>
        <name>1D-myo-inositol 2-(L-cysteinylamino)-2-deoxy-alpha-D-glucopyranoside</name>
        <dbReference type="ChEBI" id="CHEBI:58887"/>
    </ligand>
</feature>
<feature type="binding site" evidence="1">
    <location>
        <begin position="257"/>
        <end position="259"/>
    </location>
    <ligand>
        <name>acetyl-CoA</name>
        <dbReference type="ChEBI" id="CHEBI:57288"/>
        <label>2</label>
    </ligand>
</feature>
<feature type="binding site" evidence="1">
    <location>
        <begin position="264"/>
        <end position="270"/>
    </location>
    <ligand>
        <name>acetyl-CoA</name>
        <dbReference type="ChEBI" id="CHEBI:57288"/>
        <label>2</label>
    </ligand>
</feature>
<feature type="binding site" evidence="1">
    <location>
        <position position="291"/>
    </location>
    <ligand>
        <name>1D-myo-inositol 2-(L-cysteinylamino)-2-deoxy-alpha-D-glucopyranoside</name>
        <dbReference type="ChEBI" id="CHEBI:58887"/>
    </ligand>
</feature>
<feature type="binding site" evidence="1">
    <location>
        <begin position="296"/>
        <end position="301"/>
    </location>
    <ligand>
        <name>acetyl-CoA</name>
        <dbReference type="ChEBI" id="CHEBI:57288"/>
        <label>2</label>
    </ligand>
</feature>
<name>MSHD_CELFN</name>
<accession>D5UJR1</accession>
<comment type="function">
    <text evidence="1">Catalyzes the transfer of acetyl from acetyl-CoA to desacetylmycothiol (Cys-GlcN-Ins) to form mycothiol.</text>
</comment>
<comment type="catalytic activity">
    <reaction evidence="1">
        <text>1D-myo-inositol 2-(L-cysteinylamino)-2-deoxy-alpha-D-glucopyranoside + acetyl-CoA = mycothiol + CoA + H(+)</text>
        <dbReference type="Rhea" id="RHEA:26172"/>
        <dbReference type="ChEBI" id="CHEBI:15378"/>
        <dbReference type="ChEBI" id="CHEBI:16768"/>
        <dbReference type="ChEBI" id="CHEBI:57287"/>
        <dbReference type="ChEBI" id="CHEBI:57288"/>
        <dbReference type="ChEBI" id="CHEBI:58887"/>
        <dbReference type="EC" id="2.3.1.189"/>
    </reaction>
</comment>
<comment type="subunit">
    <text evidence="1">Monomer.</text>
</comment>
<comment type="similarity">
    <text evidence="1">Belongs to the acetyltransferase family. MshD subfamily.</text>
</comment>
<sequence length="348" mass="36655">MSSDIEAPTSLTSMRGALPPAVADDVRALHLTTVRHDGVPPLSEQPLLWLSDQEAPVVHVLAWHAVTGGAQELVGYAQVDVGSSTTARAELVVAPGHRRRGTGRSLLAHAAQEAASIPGRRLHVWAHGDLPAARATAAATGLVVVRELWRMAVDVTQHPPGAPQLPPGVAVRAFVPGQDEDAWRRVNARAFAHHPEQGRMTSADLRARESEPWFDPAGFLLAERDGQLLGSVWTKVHPGSEAPDGAPGEEVGEIYVVGVDPDAQGLGMGRALTALGLAHLRDRGLRTVILYTGAENTVAVHTYRRAGFARTAVDVMYGPPPAGSPAHGTPLVRVTDTPSSPGDATMGS</sequence>
<organism>
    <name type="scientific">Cellulomonas flavigena (strain ATCC 482 / DSM 20109 / BCRC 11376 / JCM 18109 / NBRC 3775 / NCIMB 8073 / NRS 134)</name>
    <dbReference type="NCBI Taxonomy" id="446466"/>
    <lineage>
        <taxon>Bacteria</taxon>
        <taxon>Bacillati</taxon>
        <taxon>Actinomycetota</taxon>
        <taxon>Actinomycetes</taxon>
        <taxon>Micrococcales</taxon>
        <taxon>Cellulomonadaceae</taxon>
        <taxon>Cellulomonas</taxon>
    </lineage>
</organism>
<gene>
    <name evidence="1" type="primary">mshD</name>
    <name type="ordered locus">Cfla_2814</name>
</gene>
<dbReference type="EC" id="2.3.1.189" evidence="1"/>
<dbReference type="EMBL" id="CP001964">
    <property type="protein sequence ID" value="ADG75699.1"/>
    <property type="molecule type" value="Genomic_DNA"/>
</dbReference>
<dbReference type="RefSeq" id="WP_013118030.1">
    <property type="nucleotide sequence ID" value="NC_014151.1"/>
</dbReference>
<dbReference type="SMR" id="D5UJR1"/>
<dbReference type="STRING" id="446466.Cfla_2814"/>
<dbReference type="KEGG" id="cfl:Cfla_2814"/>
<dbReference type="eggNOG" id="COG0456">
    <property type="taxonomic scope" value="Bacteria"/>
</dbReference>
<dbReference type="HOGENOM" id="CLU_068014_0_0_11"/>
<dbReference type="OrthoDB" id="3208058at2"/>
<dbReference type="Proteomes" id="UP000000849">
    <property type="component" value="Chromosome"/>
</dbReference>
<dbReference type="GO" id="GO:0035447">
    <property type="term" value="F:mycothiol synthase activity"/>
    <property type="evidence" value="ECO:0007669"/>
    <property type="project" value="UniProtKB-UniRule"/>
</dbReference>
<dbReference type="GO" id="GO:0010125">
    <property type="term" value="P:mycothiol biosynthetic process"/>
    <property type="evidence" value="ECO:0007669"/>
    <property type="project" value="UniProtKB-UniRule"/>
</dbReference>
<dbReference type="CDD" id="cd04301">
    <property type="entry name" value="NAT_SF"/>
    <property type="match status" value="2"/>
</dbReference>
<dbReference type="Gene3D" id="3.40.630.30">
    <property type="match status" value="1"/>
</dbReference>
<dbReference type="HAMAP" id="MF_01698">
    <property type="entry name" value="MshD"/>
    <property type="match status" value="1"/>
</dbReference>
<dbReference type="InterPro" id="IPR016181">
    <property type="entry name" value="Acyl_CoA_acyltransferase"/>
</dbReference>
<dbReference type="InterPro" id="IPR050832">
    <property type="entry name" value="Bact_Acetyltransf"/>
</dbReference>
<dbReference type="InterPro" id="IPR000182">
    <property type="entry name" value="GNAT_dom"/>
</dbReference>
<dbReference type="InterPro" id="IPR017813">
    <property type="entry name" value="Mycothiol_AcTrfase"/>
</dbReference>
<dbReference type="NCBIfam" id="TIGR03448">
    <property type="entry name" value="mycothiol_MshD"/>
    <property type="match status" value="1"/>
</dbReference>
<dbReference type="PANTHER" id="PTHR43877">
    <property type="entry name" value="AMINOALKYLPHOSPHONATE N-ACETYLTRANSFERASE-RELATED-RELATED"/>
    <property type="match status" value="1"/>
</dbReference>
<dbReference type="Pfam" id="PF00583">
    <property type="entry name" value="Acetyltransf_1"/>
    <property type="match status" value="1"/>
</dbReference>
<dbReference type="Pfam" id="PF13508">
    <property type="entry name" value="Acetyltransf_7"/>
    <property type="match status" value="1"/>
</dbReference>
<dbReference type="PIRSF" id="PIRSF021524">
    <property type="entry name" value="MSH_acetyltransferase"/>
    <property type="match status" value="1"/>
</dbReference>
<dbReference type="SUPFAM" id="SSF55729">
    <property type="entry name" value="Acyl-CoA N-acyltransferases (Nat)"/>
    <property type="match status" value="1"/>
</dbReference>
<dbReference type="PROSITE" id="PS51186">
    <property type="entry name" value="GNAT"/>
    <property type="match status" value="2"/>
</dbReference>
<reference key="1">
    <citation type="journal article" date="2010" name="Stand. Genomic Sci.">
        <title>Complete genome sequence of Cellulomonas flavigena type strain (134).</title>
        <authorList>
            <person name="Abt B."/>
            <person name="Foster B."/>
            <person name="Lapidus A."/>
            <person name="Clum A."/>
            <person name="Sun H."/>
            <person name="Pukall R."/>
            <person name="Lucas S."/>
            <person name="Glavina Del Rio T."/>
            <person name="Nolan M."/>
            <person name="Tice H."/>
            <person name="Cheng J.F."/>
            <person name="Pitluck S."/>
            <person name="Liolios K."/>
            <person name="Ivanova N."/>
            <person name="Mavromatis K."/>
            <person name="Ovchinnikova G."/>
            <person name="Pati A."/>
            <person name="Goodwin L."/>
            <person name="Chen A."/>
            <person name="Palaniappan K."/>
            <person name="Land M."/>
            <person name="Hauser L."/>
            <person name="Chang Y.J."/>
            <person name="Jeffries C.D."/>
            <person name="Rohde M."/>
            <person name="Goker M."/>
            <person name="Woyke T."/>
            <person name="Bristow J."/>
            <person name="Eisen J.A."/>
            <person name="Markowitz V."/>
            <person name="Hugenholtz P."/>
            <person name="Kyrpides N.C."/>
            <person name="Klenk H.P."/>
        </authorList>
    </citation>
    <scope>NUCLEOTIDE SEQUENCE [LARGE SCALE GENOMIC DNA]</scope>
    <source>
        <strain>ATCC 482 / DSM 20109 / BCRC 11376 / JCM 18109 / NBRC 3775 / NCIMB 8073 / NRS 134</strain>
    </source>
</reference>
<evidence type="ECO:0000255" key="1">
    <source>
        <dbReference type="HAMAP-Rule" id="MF_01698"/>
    </source>
</evidence>
<evidence type="ECO:0000256" key="2">
    <source>
        <dbReference type="SAM" id="MobiDB-lite"/>
    </source>
</evidence>
<keyword id="KW-0012">Acyltransferase</keyword>
<keyword id="KW-1185">Reference proteome</keyword>
<keyword id="KW-0677">Repeat</keyword>
<keyword id="KW-0808">Transferase</keyword>